<evidence type="ECO:0000255" key="1">
    <source>
        <dbReference type="HAMAP-Rule" id="MF_00151"/>
    </source>
</evidence>
<sequence length="158" mass="17816">MTCLYPGTFDPITNGHLDVIKRALKIFDEVIVAIAKSEHKKPCYDLEKRKELALLATQNLKNVKIIAFDNLLVDLAKELKVNTIIRGLRAVSDFEYELQIGYANHALWEDMETIYLMPSLKHAFISSSIVRSIVAHGGDVSSLVPKEILPFLKDQSCM</sequence>
<gene>
    <name evidence="1" type="primary">coaD</name>
    <name type="ordered locus">C8J_0718</name>
</gene>
<proteinExistence type="inferred from homology"/>
<dbReference type="EC" id="2.7.7.3" evidence="1"/>
<dbReference type="EMBL" id="CP000814">
    <property type="protein sequence ID" value="ABV52317.1"/>
    <property type="molecule type" value="Genomic_DNA"/>
</dbReference>
<dbReference type="RefSeq" id="WP_002852633.1">
    <property type="nucleotide sequence ID" value="NC_009839.1"/>
</dbReference>
<dbReference type="SMR" id="A8FLI0"/>
<dbReference type="KEGG" id="cju:C8J_0718"/>
<dbReference type="HOGENOM" id="CLU_100149_0_1_7"/>
<dbReference type="UniPathway" id="UPA00241">
    <property type="reaction ID" value="UER00355"/>
</dbReference>
<dbReference type="GO" id="GO:0005737">
    <property type="term" value="C:cytoplasm"/>
    <property type="evidence" value="ECO:0007669"/>
    <property type="project" value="UniProtKB-SubCell"/>
</dbReference>
<dbReference type="GO" id="GO:0005524">
    <property type="term" value="F:ATP binding"/>
    <property type="evidence" value="ECO:0007669"/>
    <property type="project" value="UniProtKB-KW"/>
</dbReference>
<dbReference type="GO" id="GO:0004595">
    <property type="term" value="F:pantetheine-phosphate adenylyltransferase activity"/>
    <property type="evidence" value="ECO:0007669"/>
    <property type="project" value="UniProtKB-UniRule"/>
</dbReference>
<dbReference type="GO" id="GO:0015937">
    <property type="term" value="P:coenzyme A biosynthetic process"/>
    <property type="evidence" value="ECO:0007669"/>
    <property type="project" value="UniProtKB-UniRule"/>
</dbReference>
<dbReference type="CDD" id="cd02163">
    <property type="entry name" value="PPAT"/>
    <property type="match status" value="1"/>
</dbReference>
<dbReference type="Gene3D" id="3.40.50.620">
    <property type="entry name" value="HUPs"/>
    <property type="match status" value="1"/>
</dbReference>
<dbReference type="HAMAP" id="MF_00151">
    <property type="entry name" value="PPAT_bact"/>
    <property type="match status" value="1"/>
</dbReference>
<dbReference type="InterPro" id="IPR004821">
    <property type="entry name" value="Cyt_trans-like"/>
</dbReference>
<dbReference type="InterPro" id="IPR001980">
    <property type="entry name" value="PPAT"/>
</dbReference>
<dbReference type="InterPro" id="IPR014729">
    <property type="entry name" value="Rossmann-like_a/b/a_fold"/>
</dbReference>
<dbReference type="NCBIfam" id="TIGR01510">
    <property type="entry name" value="coaD_prev_kdtB"/>
    <property type="match status" value="1"/>
</dbReference>
<dbReference type="NCBIfam" id="TIGR00125">
    <property type="entry name" value="cyt_tran_rel"/>
    <property type="match status" value="1"/>
</dbReference>
<dbReference type="PANTHER" id="PTHR21342">
    <property type="entry name" value="PHOSPHOPANTETHEINE ADENYLYLTRANSFERASE"/>
    <property type="match status" value="1"/>
</dbReference>
<dbReference type="PANTHER" id="PTHR21342:SF1">
    <property type="entry name" value="PHOSPHOPANTETHEINE ADENYLYLTRANSFERASE"/>
    <property type="match status" value="1"/>
</dbReference>
<dbReference type="Pfam" id="PF01467">
    <property type="entry name" value="CTP_transf_like"/>
    <property type="match status" value="1"/>
</dbReference>
<dbReference type="PRINTS" id="PR01020">
    <property type="entry name" value="LPSBIOSNTHSS"/>
</dbReference>
<dbReference type="SUPFAM" id="SSF52374">
    <property type="entry name" value="Nucleotidylyl transferase"/>
    <property type="match status" value="1"/>
</dbReference>
<feature type="chain" id="PRO_1000071519" description="Phosphopantetheine adenylyltransferase">
    <location>
        <begin position="1"/>
        <end position="158"/>
    </location>
</feature>
<feature type="binding site" evidence="1">
    <location>
        <begin position="8"/>
        <end position="9"/>
    </location>
    <ligand>
        <name>ATP</name>
        <dbReference type="ChEBI" id="CHEBI:30616"/>
    </ligand>
</feature>
<feature type="binding site" evidence="1">
    <location>
        <position position="8"/>
    </location>
    <ligand>
        <name>substrate</name>
    </ligand>
</feature>
<feature type="binding site" evidence="1">
    <location>
        <position position="16"/>
    </location>
    <ligand>
        <name>ATP</name>
        <dbReference type="ChEBI" id="CHEBI:30616"/>
    </ligand>
</feature>
<feature type="binding site" evidence="1">
    <location>
        <position position="40"/>
    </location>
    <ligand>
        <name>substrate</name>
    </ligand>
</feature>
<feature type="binding site" evidence="1">
    <location>
        <position position="72"/>
    </location>
    <ligand>
        <name>substrate</name>
    </ligand>
</feature>
<feature type="binding site" evidence="1">
    <location>
        <position position="86"/>
    </location>
    <ligand>
        <name>substrate</name>
    </ligand>
</feature>
<feature type="binding site" evidence="1">
    <location>
        <begin position="87"/>
        <end position="89"/>
    </location>
    <ligand>
        <name>ATP</name>
        <dbReference type="ChEBI" id="CHEBI:30616"/>
    </ligand>
</feature>
<feature type="binding site" evidence="1">
    <location>
        <position position="97"/>
    </location>
    <ligand>
        <name>ATP</name>
        <dbReference type="ChEBI" id="CHEBI:30616"/>
    </ligand>
</feature>
<feature type="binding site" evidence="1">
    <location>
        <begin position="122"/>
        <end position="128"/>
    </location>
    <ligand>
        <name>ATP</name>
        <dbReference type="ChEBI" id="CHEBI:30616"/>
    </ligand>
</feature>
<feature type="site" description="Transition state stabilizer" evidence="1">
    <location>
        <position position="16"/>
    </location>
</feature>
<protein>
    <recommendedName>
        <fullName evidence="1">Phosphopantetheine adenylyltransferase</fullName>
        <ecNumber evidence="1">2.7.7.3</ecNumber>
    </recommendedName>
    <alternativeName>
        <fullName evidence="1">Dephospho-CoA pyrophosphorylase</fullName>
    </alternativeName>
    <alternativeName>
        <fullName evidence="1">Pantetheine-phosphate adenylyltransferase</fullName>
        <shortName evidence="1">PPAT</shortName>
    </alternativeName>
</protein>
<organism>
    <name type="scientific">Campylobacter jejuni subsp. jejuni serotype O:6 (strain 81116 / NCTC 11828)</name>
    <dbReference type="NCBI Taxonomy" id="407148"/>
    <lineage>
        <taxon>Bacteria</taxon>
        <taxon>Pseudomonadati</taxon>
        <taxon>Campylobacterota</taxon>
        <taxon>Epsilonproteobacteria</taxon>
        <taxon>Campylobacterales</taxon>
        <taxon>Campylobacteraceae</taxon>
        <taxon>Campylobacter</taxon>
    </lineage>
</organism>
<name>COAD_CAMJ8</name>
<comment type="function">
    <text evidence="1">Reversibly transfers an adenylyl group from ATP to 4'-phosphopantetheine, yielding dephospho-CoA (dPCoA) and pyrophosphate.</text>
</comment>
<comment type="catalytic activity">
    <reaction evidence="1">
        <text>(R)-4'-phosphopantetheine + ATP + H(+) = 3'-dephospho-CoA + diphosphate</text>
        <dbReference type="Rhea" id="RHEA:19801"/>
        <dbReference type="ChEBI" id="CHEBI:15378"/>
        <dbReference type="ChEBI" id="CHEBI:30616"/>
        <dbReference type="ChEBI" id="CHEBI:33019"/>
        <dbReference type="ChEBI" id="CHEBI:57328"/>
        <dbReference type="ChEBI" id="CHEBI:61723"/>
        <dbReference type="EC" id="2.7.7.3"/>
    </reaction>
</comment>
<comment type="cofactor">
    <cofactor evidence="1">
        <name>Mg(2+)</name>
        <dbReference type="ChEBI" id="CHEBI:18420"/>
    </cofactor>
</comment>
<comment type="pathway">
    <text evidence="1">Cofactor biosynthesis; coenzyme A biosynthesis; CoA from (R)-pantothenate: step 4/5.</text>
</comment>
<comment type="subunit">
    <text evidence="1">Homohexamer.</text>
</comment>
<comment type="subcellular location">
    <subcellularLocation>
        <location evidence="1">Cytoplasm</location>
    </subcellularLocation>
</comment>
<comment type="similarity">
    <text evidence="1">Belongs to the bacterial CoaD family.</text>
</comment>
<reference key="1">
    <citation type="journal article" date="2007" name="J. Bacteriol.">
        <title>The complete genome sequence of Campylobacter jejuni strain 81116 (NCTC11828).</title>
        <authorList>
            <person name="Pearson B.M."/>
            <person name="Gaskin D.J.H."/>
            <person name="Segers R.P.A.M."/>
            <person name="Wells J.M."/>
            <person name="Nuijten P.J.M."/>
            <person name="van Vliet A.H.M."/>
        </authorList>
    </citation>
    <scope>NUCLEOTIDE SEQUENCE [LARGE SCALE GENOMIC DNA]</scope>
    <source>
        <strain>81116 / NCTC 11828</strain>
    </source>
</reference>
<accession>A8FLI0</accession>
<keyword id="KW-0067">ATP-binding</keyword>
<keyword id="KW-0173">Coenzyme A biosynthesis</keyword>
<keyword id="KW-0963">Cytoplasm</keyword>
<keyword id="KW-0460">Magnesium</keyword>
<keyword id="KW-0547">Nucleotide-binding</keyword>
<keyword id="KW-0548">Nucleotidyltransferase</keyword>
<keyword id="KW-0808">Transferase</keyword>